<feature type="chain" id="PRO_0000387127" description="Ribosomal RNA small subunit methyltransferase H">
    <location>
        <begin position="1"/>
        <end position="313"/>
    </location>
</feature>
<feature type="binding site" evidence="1">
    <location>
        <begin position="35"/>
        <end position="37"/>
    </location>
    <ligand>
        <name>S-adenosyl-L-methionine</name>
        <dbReference type="ChEBI" id="CHEBI:59789"/>
    </ligand>
</feature>
<feature type="binding site" evidence="1">
    <location>
        <position position="55"/>
    </location>
    <ligand>
        <name>S-adenosyl-L-methionine</name>
        <dbReference type="ChEBI" id="CHEBI:59789"/>
    </ligand>
</feature>
<feature type="binding site" evidence="1">
    <location>
        <position position="79"/>
    </location>
    <ligand>
        <name>S-adenosyl-L-methionine</name>
        <dbReference type="ChEBI" id="CHEBI:59789"/>
    </ligand>
</feature>
<feature type="binding site" evidence="1">
    <location>
        <position position="101"/>
    </location>
    <ligand>
        <name>S-adenosyl-L-methionine</name>
        <dbReference type="ChEBI" id="CHEBI:59789"/>
    </ligand>
</feature>
<feature type="binding site" evidence="1">
    <location>
        <position position="108"/>
    </location>
    <ligand>
        <name>S-adenosyl-L-methionine</name>
        <dbReference type="ChEBI" id="CHEBI:59789"/>
    </ligand>
</feature>
<evidence type="ECO:0000255" key="1">
    <source>
        <dbReference type="HAMAP-Rule" id="MF_01007"/>
    </source>
</evidence>
<accession>B2U287</accession>
<sequence length="313" mass="34878">MMENYKHTTVLLDEAVNGLNIRPDGIYIDGTFGRGGHSRLILSQLGEEGRLLAIDRDPQAIAVAKTIDDPRFSIIHGPFSALGEYVAERDLIGKIDGILLDLGVSSPQLDDAERGFSFMRDGPLDMRMDPTRGQSAAEWLQTAEEADIAWVLKTYGEERFAKRIARAIVERNREQPMTRTKELAEVVAAATPVKDKFKHPATRTFQAVRIWVNSELEEIEQALKSSLNVLAPGGRLSIISFHSLEDRIVKRFMRENSRGPQVPAGLPMTEEQLKKLGGRQLRALGKLMPGEEEVAENPRARSSVLRIAERTNA</sequence>
<dbReference type="EC" id="2.1.1.199" evidence="1"/>
<dbReference type="EMBL" id="CP001063">
    <property type="protein sequence ID" value="ACD07662.1"/>
    <property type="molecule type" value="Genomic_DNA"/>
</dbReference>
<dbReference type="RefSeq" id="WP_000970479.1">
    <property type="nucleotide sequence ID" value="NC_010658.1"/>
</dbReference>
<dbReference type="SMR" id="B2U287"/>
<dbReference type="STRING" id="344609.SbBS512_E0075"/>
<dbReference type="GeneID" id="86862592"/>
<dbReference type="KEGG" id="sbc:SbBS512_E0075"/>
<dbReference type="HOGENOM" id="CLU_038422_2_0_6"/>
<dbReference type="Proteomes" id="UP000001030">
    <property type="component" value="Chromosome"/>
</dbReference>
<dbReference type="GO" id="GO:0005737">
    <property type="term" value="C:cytoplasm"/>
    <property type="evidence" value="ECO:0007669"/>
    <property type="project" value="UniProtKB-SubCell"/>
</dbReference>
<dbReference type="GO" id="GO:0071424">
    <property type="term" value="F:rRNA (cytosine-N4-)-methyltransferase activity"/>
    <property type="evidence" value="ECO:0007669"/>
    <property type="project" value="UniProtKB-UniRule"/>
</dbReference>
<dbReference type="GO" id="GO:0070475">
    <property type="term" value="P:rRNA base methylation"/>
    <property type="evidence" value="ECO:0007669"/>
    <property type="project" value="UniProtKB-UniRule"/>
</dbReference>
<dbReference type="FunFam" id="1.10.150.170:FF:000001">
    <property type="entry name" value="Ribosomal RNA small subunit methyltransferase H"/>
    <property type="match status" value="1"/>
</dbReference>
<dbReference type="Gene3D" id="1.10.150.170">
    <property type="entry name" value="Putative methyltransferase TM0872, insert domain"/>
    <property type="match status" value="1"/>
</dbReference>
<dbReference type="Gene3D" id="3.40.50.150">
    <property type="entry name" value="Vaccinia Virus protein VP39"/>
    <property type="match status" value="1"/>
</dbReference>
<dbReference type="HAMAP" id="MF_01007">
    <property type="entry name" value="16SrRNA_methyltr_H"/>
    <property type="match status" value="1"/>
</dbReference>
<dbReference type="InterPro" id="IPR002903">
    <property type="entry name" value="RsmH"/>
</dbReference>
<dbReference type="InterPro" id="IPR023397">
    <property type="entry name" value="SAM-dep_MeTrfase_MraW_recog"/>
</dbReference>
<dbReference type="InterPro" id="IPR029063">
    <property type="entry name" value="SAM-dependent_MTases_sf"/>
</dbReference>
<dbReference type="NCBIfam" id="TIGR00006">
    <property type="entry name" value="16S rRNA (cytosine(1402)-N(4))-methyltransferase RsmH"/>
    <property type="match status" value="1"/>
</dbReference>
<dbReference type="PANTHER" id="PTHR11265:SF0">
    <property type="entry name" value="12S RRNA N4-METHYLCYTIDINE METHYLTRANSFERASE"/>
    <property type="match status" value="1"/>
</dbReference>
<dbReference type="PANTHER" id="PTHR11265">
    <property type="entry name" value="S-ADENOSYL-METHYLTRANSFERASE MRAW"/>
    <property type="match status" value="1"/>
</dbReference>
<dbReference type="Pfam" id="PF01795">
    <property type="entry name" value="Methyltransf_5"/>
    <property type="match status" value="1"/>
</dbReference>
<dbReference type="PIRSF" id="PIRSF004486">
    <property type="entry name" value="MraW"/>
    <property type="match status" value="1"/>
</dbReference>
<dbReference type="SUPFAM" id="SSF81799">
    <property type="entry name" value="Putative methyltransferase TM0872, insert domain"/>
    <property type="match status" value="1"/>
</dbReference>
<dbReference type="SUPFAM" id="SSF53335">
    <property type="entry name" value="S-adenosyl-L-methionine-dependent methyltransferases"/>
    <property type="match status" value="1"/>
</dbReference>
<comment type="function">
    <text evidence="1">Specifically methylates the N4 position of cytidine in position 1402 (C1402) of 16S rRNA.</text>
</comment>
<comment type="catalytic activity">
    <reaction evidence="1">
        <text>cytidine(1402) in 16S rRNA + S-adenosyl-L-methionine = N(4)-methylcytidine(1402) in 16S rRNA + S-adenosyl-L-homocysteine + H(+)</text>
        <dbReference type="Rhea" id="RHEA:42928"/>
        <dbReference type="Rhea" id="RHEA-COMP:10286"/>
        <dbReference type="Rhea" id="RHEA-COMP:10287"/>
        <dbReference type="ChEBI" id="CHEBI:15378"/>
        <dbReference type="ChEBI" id="CHEBI:57856"/>
        <dbReference type="ChEBI" id="CHEBI:59789"/>
        <dbReference type="ChEBI" id="CHEBI:74506"/>
        <dbReference type="ChEBI" id="CHEBI:82748"/>
        <dbReference type="EC" id="2.1.1.199"/>
    </reaction>
</comment>
<comment type="subcellular location">
    <subcellularLocation>
        <location evidence="1">Cytoplasm</location>
    </subcellularLocation>
</comment>
<comment type="similarity">
    <text evidence="1">Belongs to the methyltransferase superfamily. RsmH family.</text>
</comment>
<protein>
    <recommendedName>
        <fullName evidence="1">Ribosomal RNA small subunit methyltransferase H</fullName>
        <ecNumber evidence="1">2.1.1.199</ecNumber>
    </recommendedName>
    <alternativeName>
        <fullName evidence="1">16S rRNA m(4)C1402 methyltransferase</fullName>
    </alternativeName>
    <alternativeName>
        <fullName evidence="1">rRNA (cytosine-N(4)-)-methyltransferase RsmH</fullName>
    </alternativeName>
</protein>
<organism>
    <name type="scientific">Shigella boydii serotype 18 (strain CDC 3083-94 / BS512)</name>
    <dbReference type="NCBI Taxonomy" id="344609"/>
    <lineage>
        <taxon>Bacteria</taxon>
        <taxon>Pseudomonadati</taxon>
        <taxon>Pseudomonadota</taxon>
        <taxon>Gammaproteobacteria</taxon>
        <taxon>Enterobacterales</taxon>
        <taxon>Enterobacteriaceae</taxon>
        <taxon>Shigella</taxon>
    </lineage>
</organism>
<name>RSMH_SHIB3</name>
<reference key="1">
    <citation type="submission" date="2008-05" db="EMBL/GenBank/DDBJ databases">
        <title>Complete sequence of Shigella boydii serotype 18 strain BS512.</title>
        <authorList>
            <person name="Rasko D.A."/>
            <person name="Rosovitz M."/>
            <person name="Maurelli A.T."/>
            <person name="Myers G."/>
            <person name="Seshadri R."/>
            <person name="Cer R."/>
            <person name="Jiang L."/>
            <person name="Ravel J."/>
            <person name="Sebastian Y."/>
        </authorList>
    </citation>
    <scope>NUCLEOTIDE SEQUENCE [LARGE SCALE GENOMIC DNA]</scope>
    <source>
        <strain>CDC 3083-94 / BS512</strain>
    </source>
</reference>
<proteinExistence type="inferred from homology"/>
<gene>
    <name evidence="1" type="primary">rsmH</name>
    <name type="synonym">mraW</name>
    <name type="ordered locus">SbBS512_E0075</name>
</gene>
<keyword id="KW-0963">Cytoplasm</keyword>
<keyword id="KW-0489">Methyltransferase</keyword>
<keyword id="KW-1185">Reference proteome</keyword>
<keyword id="KW-0698">rRNA processing</keyword>
<keyword id="KW-0949">S-adenosyl-L-methionine</keyword>
<keyword id="KW-0808">Transferase</keyword>